<name>DCTD_BPT2</name>
<keyword id="KW-0021">Allosteric enzyme</keyword>
<keyword id="KW-0903">Direct protein sequencing</keyword>
<keyword id="KW-0378">Hydrolase</keyword>
<keyword id="KW-0479">Metal-binding</keyword>
<keyword id="KW-0545">Nucleotide biosynthesis</keyword>
<keyword id="KW-0862">Zinc</keyword>
<organism>
    <name type="scientific">Enterobacteria phage T2</name>
    <name type="common">Bacteriophage T2</name>
    <dbReference type="NCBI Taxonomy" id="2060721"/>
    <lineage>
        <taxon>Viruses</taxon>
        <taxon>Duplodnaviria</taxon>
        <taxon>Heunggongvirae</taxon>
        <taxon>Uroviricota</taxon>
        <taxon>Caudoviricetes</taxon>
        <taxon>Straboviridae</taxon>
        <taxon>Tevenvirinae</taxon>
        <taxon>Tequatrovirus</taxon>
        <taxon>Tequatrovirus T2</taxon>
    </lineage>
</organism>
<gene>
    <name type="primary">CD</name>
</gene>
<proteinExistence type="evidence at protein level"/>
<protein>
    <recommendedName>
        <fullName>Deoxycytidylate deaminase</fullName>
        <ecNumber>3.5.4.12</ecNumber>
    </recommendedName>
    <alternativeName>
        <fullName>dCMP deaminase</fullName>
    </alternativeName>
</protein>
<feature type="chain" id="PRO_0000171700" description="Deoxycytidylate deaminase">
    <location>
        <begin position="1"/>
        <end position="188"/>
    </location>
</feature>
<feature type="domain" description="CMP/dCMP-type deaminase" evidence="2">
    <location>
        <begin position="1"/>
        <end position="171"/>
    </location>
</feature>
<feature type="active site" description="Proton donor" evidence="1">
    <location>
        <position position="106"/>
    </location>
</feature>
<feature type="binding site" evidence="1">
    <location>
        <position position="19"/>
    </location>
    <ligand>
        <name>Zn(2+)</name>
        <dbReference type="ChEBI" id="CHEBI:29105"/>
        <label>1</label>
        <note>structural</note>
    </ligand>
</feature>
<feature type="binding site" evidence="1">
    <location>
        <position position="49"/>
    </location>
    <ligand>
        <name>Zn(2+)</name>
        <dbReference type="ChEBI" id="CHEBI:29105"/>
        <label>1</label>
        <note>structural</note>
    </ligand>
</feature>
<feature type="binding site" evidence="1">
    <location>
        <position position="94"/>
    </location>
    <ligand>
        <name>Zn(2+)</name>
        <dbReference type="ChEBI" id="CHEBI:29105"/>
        <label>1</label>
        <note>structural</note>
    </ligand>
</feature>
<feature type="binding site" evidence="1">
    <location>
        <position position="102"/>
    </location>
    <ligand>
        <name>Zn(2+)</name>
        <dbReference type="ChEBI" id="CHEBI:29105"/>
        <label>2</label>
        <note>catalytic</note>
    </ligand>
</feature>
<feature type="binding site" evidence="1">
    <location>
        <position position="104"/>
    </location>
    <ligand>
        <name>Zn(2+)</name>
        <dbReference type="ChEBI" id="CHEBI:29105"/>
        <label>2</label>
        <note>catalytic</note>
    </ligand>
</feature>
<feature type="binding site" evidence="1">
    <location>
        <position position="132"/>
    </location>
    <ligand>
        <name>Zn(2+)</name>
        <dbReference type="ChEBI" id="CHEBI:29105"/>
        <label>2</label>
        <note>catalytic</note>
    </ligand>
</feature>
<feature type="binding site" evidence="1">
    <location>
        <position position="135"/>
    </location>
    <ligand>
        <name>Zn(2+)</name>
        <dbReference type="ChEBI" id="CHEBI:29105"/>
        <label>2</label>
        <note>catalytic</note>
    </ligand>
</feature>
<reference key="1">
    <citation type="journal article" date="1983" name="J. Biol. Chem.">
        <title>Complete amino acid sequence of an allosteric enzyme, T2 bacteriophage deoxycytidylate deaminase.</title>
        <authorList>
            <person name="Maley G.F."/>
            <person name="Guarino D.U."/>
            <person name="Maley F."/>
        </authorList>
    </citation>
    <scope>PROTEIN SEQUENCE</scope>
</reference>
<evidence type="ECO:0000250" key="1"/>
<evidence type="ECO:0000255" key="2">
    <source>
        <dbReference type="PROSITE-ProRule" id="PRU01083"/>
    </source>
</evidence>
<evidence type="ECO:0000305" key="3"/>
<accession>P00814</accession>
<dbReference type="EC" id="3.5.4.12"/>
<dbReference type="PIR" id="A01011">
    <property type="entry name" value="DUBPC2"/>
</dbReference>
<dbReference type="SMR" id="P00814"/>
<dbReference type="GO" id="GO:0004132">
    <property type="term" value="F:dCMP deaminase activity"/>
    <property type="evidence" value="ECO:0007669"/>
    <property type="project" value="UniProtKB-EC"/>
</dbReference>
<dbReference type="GO" id="GO:0008270">
    <property type="term" value="F:zinc ion binding"/>
    <property type="evidence" value="ECO:0007669"/>
    <property type="project" value="InterPro"/>
</dbReference>
<dbReference type="GO" id="GO:0009972">
    <property type="term" value="P:cytidine deamination"/>
    <property type="evidence" value="ECO:0007669"/>
    <property type="project" value="TreeGrafter"/>
</dbReference>
<dbReference type="GO" id="GO:0009165">
    <property type="term" value="P:nucleotide biosynthetic process"/>
    <property type="evidence" value="ECO:0007669"/>
    <property type="project" value="UniProtKB-KW"/>
</dbReference>
<dbReference type="GO" id="GO:0006220">
    <property type="term" value="P:pyrimidine nucleotide metabolic process"/>
    <property type="evidence" value="ECO:0007669"/>
    <property type="project" value="InterPro"/>
</dbReference>
<dbReference type="CDD" id="cd01286">
    <property type="entry name" value="deoxycytidylate_deaminase"/>
    <property type="match status" value="1"/>
</dbReference>
<dbReference type="Gene3D" id="3.40.140.10">
    <property type="entry name" value="Cytidine Deaminase, domain 2"/>
    <property type="match status" value="1"/>
</dbReference>
<dbReference type="InterPro" id="IPR016192">
    <property type="entry name" value="APOBEC/CMP_deaminase_Zn-bd"/>
</dbReference>
<dbReference type="InterPro" id="IPR002125">
    <property type="entry name" value="CMP_dCMP_dom"/>
</dbReference>
<dbReference type="InterPro" id="IPR016193">
    <property type="entry name" value="Cytidine_deaminase-like"/>
</dbReference>
<dbReference type="InterPro" id="IPR016473">
    <property type="entry name" value="dCMP_deaminase"/>
</dbReference>
<dbReference type="InterPro" id="IPR015517">
    <property type="entry name" value="dCMP_deaminase-rel"/>
</dbReference>
<dbReference type="InterPro" id="IPR035105">
    <property type="entry name" value="Deoxycytidylate_deaminase_dom"/>
</dbReference>
<dbReference type="PANTHER" id="PTHR11086:SF18">
    <property type="entry name" value="DEOXYCYTIDYLATE DEAMINASE"/>
    <property type="match status" value="1"/>
</dbReference>
<dbReference type="PANTHER" id="PTHR11086">
    <property type="entry name" value="DEOXYCYTIDYLATE DEAMINASE-RELATED"/>
    <property type="match status" value="1"/>
</dbReference>
<dbReference type="Pfam" id="PF00383">
    <property type="entry name" value="dCMP_cyt_deam_1"/>
    <property type="match status" value="1"/>
</dbReference>
<dbReference type="PIRSF" id="PIRSF006019">
    <property type="entry name" value="dCMP_deaminase"/>
    <property type="match status" value="1"/>
</dbReference>
<dbReference type="SUPFAM" id="SSF53927">
    <property type="entry name" value="Cytidine deaminase-like"/>
    <property type="match status" value="1"/>
</dbReference>
<dbReference type="PROSITE" id="PS00903">
    <property type="entry name" value="CYT_DCMP_DEAMINASES_1"/>
    <property type="match status" value="1"/>
</dbReference>
<dbReference type="PROSITE" id="PS51747">
    <property type="entry name" value="CYT_DCMP_DEAMINASES_2"/>
    <property type="match status" value="1"/>
</dbReference>
<organismHost>
    <name type="scientific">Escherichia coli</name>
    <dbReference type="NCBI Taxonomy" id="562"/>
</organismHost>
<comment type="function">
    <text>Supplies the nucleotide substrate for thymidylate synthetase.</text>
</comment>
<comment type="catalytic activity">
    <reaction>
        <text>dCMP + H2O + H(+) = dUMP + NH4(+)</text>
        <dbReference type="Rhea" id="RHEA:22924"/>
        <dbReference type="ChEBI" id="CHEBI:15377"/>
        <dbReference type="ChEBI" id="CHEBI:15378"/>
        <dbReference type="ChEBI" id="CHEBI:28938"/>
        <dbReference type="ChEBI" id="CHEBI:57566"/>
        <dbReference type="ChEBI" id="CHEBI:246422"/>
        <dbReference type="EC" id="3.5.4.12"/>
    </reaction>
</comment>
<comment type="cofactor">
    <cofactor evidence="1">
        <name>Zn(2+)</name>
        <dbReference type="ChEBI" id="CHEBI:29105"/>
    </cofactor>
    <text evidence="1">Binds 2 Zn(2+) ions per subunit.</text>
</comment>
<comment type="activity regulation">
    <text>Allosteric enzyme whose activity is greatly influenced by the end products of its metabolic pathway, dCTP and dTTP.</text>
</comment>
<comment type="subunit">
    <text>Homohexamer.</text>
</comment>
<comment type="similarity">
    <text evidence="3">Belongs to the cytidine and deoxycytidylate deaminase family.</text>
</comment>
<sequence>MKASTVLQIAYLVSQESKCCSWKVGAVIEKNGRIISTGYNGSPAGGVNCDNYAAIEGWLLNKPKHTIIQGHKPECVSFGTSDRFVLAKEHRSAHSEWSSKNEIHAELNAILFAARNGSSIEGATMYVTLSPCPDCAKAIAQSGIKKLVYCETYDKNKPGWDDILRNAGIEVFNVPKLNWENISEFCGE</sequence>